<reference key="1">
    <citation type="journal article" date="2008" name="PLoS ONE">
        <title>Environmental adaptation: genomic analysis of the piezotolerant and psychrotolerant deep-sea iron reducing bacterium Shewanella piezotolerans WP3.</title>
        <authorList>
            <person name="Wang F."/>
            <person name="Wang J."/>
            <person name="Jian H."/>
            <person name="Zhang B."/>
            <person name="Li S."/>
            <person name="Wang F."/>
            <person name="Zeng X."/>
            <person name="Gao L."/>
            <person name="Bartlett D.H."/>
            <person name="Yu J."/>
            <person name="Hu S."/>
            <person name="Xiao X."/>
        </authorList>
    </citation>
    <scope>NUCLEOTIDE SEQUENCE [LARGE SCALE GENOMIC DNA]</scope>
    <source>
        <strain>WP3 / JCM 13877</strain>
    </source>
</reference>
<protein>
    <recommendedName>
        <fullName evidence="1">GTP cyclohydrolase-2</fullName>
        <ecNumber evidence="1">3.5.4.25</ecNumber>
    </recommendedName>
    <alternativeName>
        <fullName evidence="1">GTP cyclohydrolase II</fullName>
    </alternativeName>
</protein>
<sequence length="205" mass="22952">MSIKYIASSKLPTPWGVFEMHGFEDSETGKEHVALTLGVFDAESPILGRIHSECLTGDALFSLRCDCGFQLQTAMQNIAEAGQGFILYLRQEGRGIGLLNKIRAYELQDGGANTVEANERLGFAADMRKYDMIIPMMEQIGISKVRLMTNNPRKVKAMQSFGLEVVERVPLQVGKNRYNEGYLKTKSTELGHMMSEHHFTEEGKD</sequence>
<name>RIBA_SHEPW</name>
<gene>
    <name evidence="1" type="primary">ribA</name>
    <name type="ordered locus">swp_3162</name>
</gene>
<proteinExistence type="inferred from homology"/>
<dbReference type="EC" id="3.5.4.25" evidence="1"/>
<dbReference type="EMBL" id="CP000472">
    <property type="protein sequence ID" value="ACJ29870.1"/>
    <property type="molecule type" value="Genomic_DNA"/>
</dbReference>
<dbReference type="RefSeq" id="WP_020913221.1">
    <property type="nucleotide sequence ID" value="NC_011566.1"/>
</dbReference>
<dbReference type="SMR" id="B8CQ07"/>
<dbReference type="STRING" id="225849.swp_3162"/>
<dbReference type="KEGG" id="swp:swp_3162"/>
<dbReference type="eggNOG" id="COG0807">
    <property type="taxonomic scope" value="Bacteria"/>
</dbReference>
<dbReference type="HOGENOM" id="CLU_020273_2_1_6"/>
<dbReference type="OrthoDB" id="9793111at2"/>
<dbReference type="UniPathway" id="UPA00275">
    <property type="reaction ID" value="UER00400"/>
</dbReference>
<dbReference type="Proteomes" id="UP000000753">
    <property type="component" value="Chromosome"/>
</dbReference>
<dbReference type="GO" id="GO:0005829">
    <property type="term" value="C:cytosol"/>
    <property type="evidence" value="ECO:0007669"/>
    <property type="project" value="TreeGrafter"/>
</dbReference>
<dbReference type="GO" id="GO:0005525">
    <property type="term" value="F:GTP binding"/>
    <property type="evidence" value="ECO:0007669"/>
    <property type="project" value="UniProtKB-KW"/>
</dbReference>
<dbReference type="GO" id="GO:0003935">
    <property type="term" value="F:GTP cyclohydrolase II activity"/>
    <property type="evidence" value="ECO:0007669"/>
    <property type="project" value="UniProtKB-UniRule"/>
</dbReference>
<dbReference type="GO" id="GO:0008270">
    <property type="term" value="F:zinc ion binding"/>
    <property type="evidence" value="ECO:0007669"/>
    <property type="project" value="UniProtKB-UniRule"/>
</dbReference>
<dbReference type="GO" id="GO:0009231">
    <property type="term" value="P:riboflavin biosynthetic process"/>
    <property type="evidence" value="ECO:0007669"/>
    <property type="project" value="UniProtKB-UniRule"/>
</dbReference>
<dbReference type="CDD" id="cd00641">
    <property type="entry name" value="GTP_cyclohydro2"/>
    <property type="match status" value="1"/>
</dbReference>
<dbReference type="FunFam" id="3.40.50.10990:FF:000002">
    <property type="entry name" value="GTP cyclohydrolase-2"/>
    <property type="match status" value="1"/>
</dbReference>
<dbReference type="Gene3D" id="3.40.50.10990">
    <property type="entry name" value="GTP cyclohydrolase II"/>
    <property type="match status" value="1"/>
</dbReference>
<dbReference type="HAMAP" id="MF_00179">
    <property type="entry name" value="RibA"/>
    <property type="match status" value="1"/>
</dbReference>
<dbReference type="InterPro" id="IPR032677">
    <property type="entry name" value="GTP_cyclohydro_II"/>
</dbReference>
<dbReference type="InterPro" id="IPR000926">
    <property type="entry name" value="RibA"/>
</dbReference>
<dbReference type="InterPro" id="IPR036144">
    <property type="entry name" value="RibA-like_sf"/>
</dbReference>
<dbReference type="NCBIfam" id="NF001591">
    <property type="entry name" value="PRK00393.1"/>
    <property type="match status" value="1"/>
</dbReference>
<dbReference type="NCBIfam" id="TIGR00505">
    <property type="entry name" value="ribA"/>
    <property type="match status" value="1"/>
</dbReference>
<dbReference type="PANTHER" id="PTHR21327:SF18">
    <property type="entry name" value="3,4-DIHYDROXY-2-BUTANONE 4-PHOSPHATE SYNTHASE"/>
    <property type="match status" value="1"/>
</dbReference>
<dbReference type="PANTHER" id="PTHR21327">
    <property type="entry name" value="GTP CYCLOHYDROLASE II-RELATED"/>
    <property type="match status" value="1"/>
</dbReference>
<dbReference type="Pfam" id="PF00925">
    <property type="entry name" value="GTP_cyclohydro2"/>
    <property type="match status" value="1"/>
</dbReference>
<dbReference type="SUPFAM" id="SSF142695">
    <property type="entry name" value="RibA-like"/>
    <property type="match status" value="1"/>
</dbReference>
<keyword id="KW-0342">GTP-binding</keyword>
<keyword id="KW-0378">Hydrolase</keyword>
<keyword id="KW-0479">Metal-binding</keyword>
<keyword id="KW-0547">Nucleotide-binding</keyword>
<keyword id="KW-0686">Riboflavin biosynthesis</keyword>
<keyword id="KW-0862">Zinc</keyword>
<comment type="function">
    <text evidence="1">Catalyzes the conversion of GTP to 2,5-diamino-6-ribosylamino-4(3H)-pyrimidinone 5'-phosphate (DARP), formate and pyrophosphate.</text>
</comment>
<comment type="catalytic activity">
    <reaction evidence="1">
        <text>GTP + 4 H2O = 2,5-diamino-6-hydroxy-4-(5-phosphoribosylamino)-pyrimidine + formate + 2 phosphate + 3 H(+)</text>
        <dbReference type="Rhea" id="RHEA:23704"/>
        <dbReference type="ChEBI" id="CHEBI:15377"/>
        <dbReference type="ChEBI" id="CHEBI:15378"/>
        <dbReference type="ChEBI" id="CHEBI:15740"/>
        <dbReference type="ChEBI" id="CHEBI:37565"/>
        <dbReference type="ChEBI" id="CHEBI:43474"/>
        <dbReference type="ChEBI" id="CHEBI:58614"/>
        <dbReference type="EC" id="3.5.4.25"/>
    </reaction>
</comment>
<comment type="cofactor">
    <cofactor evidence="1">
        <name>Zn(2+)</name>
        <dbReference type="ChEBI" id="CHEBI:29105"/>
    </cofactor>
    <text evidence="1">Binds 1 zinc ion per subunit.</text>
</comment>
<comment type="pathway">
    <text evidence="1">Cofactor biosynthesis; riboflavin biosynthesis; 5-amino-6-(D-ribitylamino)uracil from GTP: step 1/4.</text>
</comment>
<comment type="similarity">
    <text evidence="1">Belongs to the GTP cyclohydrolase II family.</text>
</comment>
<accession>B8CQ07</accession>
<feature type="chain" id="PRO_1000118433" description="GTP cyclohydrolase-2">
    <location>
        <begin position="1"/>
        <end position="205"/>
    </location>
</feature>
<feature type="active site" description="Proton acceptor" evidence="1">
    <location>
        <position position="126"/>
    </location>
</feature>
<feature type="active site" description="Nucleophile" evidence="1">
    <location>
        <position position="128"/>
    </location>
</feature>
<feature type="binding site" evidence="1">
    <location>
        <begin position="49"/>
        <end position="53"/>
    </location>
    <ligand>
        <name>GTP</name>
        <dbReference type="ChEBI" id="CHEBI:37565"/>
    </ligand>
</feature>
<feature type="binding site" evidence="1">
    <location>
        <position position="54"/>
    </location>
    <ligand>
        <name>Zn(2+)</name>
        <dbReference type="ChEBI" id="CHEBI:29105"/>
        <note>catalytic</note>
    </ligand>
</feature>
<feature type="binding site" evidence="1">
    <location>
        <position position="65"/>
    </location>
    <ligand>
        <name>Zn(2+)</name>
        <dbReference type="ChEBI" id="CHEBI:29105"/>
        <note>catalytic</note>
    </ligand>
</feature>
<feature type="binding site" evidence="1">
    <location>
        <position position="67"/>
    </location>
    <ligand>
        <name>Zn(2+)</name>
        <dbReference type="ChEBI" id="CHEBI:29105"/>
        <note>catalytic</note>
    </ligand>
</feature>
<feature type="binding site" evidence="1">
    <location>
        <position position="70"/>
    </location>
    <ligand>
        <name>GTP</name>
        <dbReference type="ChEBI" id="CHEBI:37565"/>
    </ligand>
</feature>
<feature type="binding site" evidence="1">
    <location>
        <begin position="92"/>
        <end position="94"/>
    </location>
    <ligand>
        <name>GTP</name>
        <dbReference type="ChEBI" id="CHEBI:37565"/>
    </ligand>
</feature>
<feature type="binding site" evidence="1">
    <location>
        <position position="114"/>
    </location>
    <ligand>
        <name>GTP</name>
        <dbReference type="ChEBI" id="CHEBI:37565"/>
    </ligand>
</feature>
<feature type="binding site" evidence="1">
    <location>
        <position position="149"/>
    </location>
    <ligand>
        <name>GTP</name>
        <dbReference type="ChEBI" id="CHEBI:37565"/>
    </ligand>
</feature>
<feature type="binding site" evidence="1">
    <location>
        <position position="154"/>
    </location>
    <ligand>
        <name>GTP</name>
        <dbReference type="ChEBI" id="CHEBI:37565"/>
    </ligand>
</feature>
<organism>
    <name type="scientific">Shewanella piezotolerans (strain WP3 / JCM 13877)</name>
    <dbReference type="NCBI Taxonomy" id="225849"/>
    <lineage>
        <taxon>Bacteria</taxon>
        <taxon>Pseudomonadati</taxon>
        <taxon>Pseudomonadota</taxon>
        <taxon>Gammaproteobacteria</taxon>
        <taxon>Alteromonadales</taxon>
        <taxon>Shewanellaceae</taxon>
        <taxon>Shewanella</taxon>
    </lineage>
</organism>
<evidence type="ECO:0000255" key="1">
    <source>
        <dbReference type="HAMAP-Rule" id="MF_00179"/>
    </source>
</evidence>